<reference key="1">
    <citation type="journal article" date="2003" name="DNA Res.">
        <title>Prediction of the coding sequences of mouse homologues of KIAA gene: II. The complete nucleotide sequences of 400 mouse KIAA-homologous cDNAs identified by screening of terminal sequences of cDNA clones randomly sampled from size-fractionated libraries.</title>
        <authorList>
            <person name="Okazaki N."/>
            <person name="Kikuno R."/>
            <person name="Ohara R."/>
            <person name="Inamoto S."/>
            <person name="Aizawa H."/>
            <person name="Yuasa S."/>
            <person name="Nakajima D."/>
            <person name="Nagase T."/>
            <person name="Ohara O."/>
            <person name="Koga H."/>
        </authorList>
    </citation>
    <scope>NUCLEOTIDE SEQUENCE [LARGE SCALE MRNA]</scope>
    <source>
        <tissue>Brain</tissue>
    </source>
</reference>
<reference key="2">
    <citation type="journal article" date="2005" name="Science">
        <title>The transcriptional landscape of the mammalian genome.</title>
        <authorList>
            <person name="Carninci P."/>
            <person name="Kasukawa T."/>
            <person name="Katayama S."/>
            <person name="Gough J."/>
            <person name="Frith M.C."/>
            <person name="Maeda N."/>
            <person name="Oyama R."/>
            <person name="Ravasi T."/>
            <person name="Lenhard B."/>
            <person name="Wells C."/>
            <person name="Kodzius R."/>
            <person name="Shimokawa K."/>
            <person name="Bajic V.B."/>
            <person name="Brenner S.E."/>
            <person name="Batalov S."/>
            <person name="Forrest A.R."/>
            <person name="Zavolan M."/>
            <person name="Davis M.J."/>
            <person name="Wilming L.G."/>
            <person name="Aidinis V."/>
            <person name="Allen J.E."/>
            <person name="Ambesi-Impiombato A."/>
            <person name="Apweiler R."/>
            <person name="Aturaliya R.N."/>
            <person name="Bailey T.L."/>
            <person name="Bansal M."/>
            <person name="Baxter L."/>
            <person name="Beisel K.W."/>
            <person name="Bersano T."/>
            <person name="Bono H."/>
            <person name="Chalk A.M."/>
            <person name="Chiu K.P."/>
            <person name="Choudhary V."/>
            <person name="Christoffels A."/>
            <person name="Clutterbuck D.R."/>
            <person name="Crowe M.L."/>
            <person name="Dalla E."/>
            <person name="Dalrymple B.P."/>
            <person name="de Bono B."/>
            <person name="Della Gatta G."/>
            <person name="di Bernardo D."/>
            <person name="Down T."/>
            <person name="Engstrom P."/>
            <person name="Fagiolini M."/>
            <person name="Faulkner G."/>
            <person name="Fletcher C.F."/>
            <person name="Fukushima T."/>
            <person name="Furuno M."/>
            <person name="Futaki S."/>
            <person name="Gariboldi M."/>
            <person name="Georgii-Hemming P."/>
            <person name="Gingeras T.R."/>
            <person name="Gojobori T."/>
            <person name="Green R.E."/>
            <person name="Gustincich S."/>
            <person name="Harbers M."/>
            <person name="Hayashi Y."/>
            <person name="Hensch T.K."/>
            <person name="Hirokawa N."/>
            <person name="Hill D."/>
            <person name="Huminiecki L."/>
            <person name="Iacono M."/>
            <person name="Ikeo K."/>
            <person name="Iwama A."/>
            <person name="Ishikawa T."/>
            <person name="Jakt M."/>
            <person name="Kanapin A."/>
            <person name="Katoh M."/>
            <person name="Kawasawa Y."/>
            <person name="Kelso J."/>
            <person name="Kitamura H."/>
            <person name="Kitano H."/>
            <person name="Kollias G."/>
            <person name="Krishnan S.P."/>
            <person name="Kruger A."/>
            <person name="Kummerfeld S.K."/>
            <person name="Kurochkin I.V."/>
            <person name="Lareau L.F."/>
            <person name="Lazarevic D."/>
            <person name="Lipovich L."/>
            <person name="Liu J."/>
            <person name="Liuni S."/>
            <person name="McWilliam S."/>
            <person name="Madan Babu M."/>
            <person name="Madera M."/>
            <person name="Marchionni L."/>
            <person name="Matsuda H."/>
            <person name="Matsuzawa S."/>
            <person name="Miki H."/>
            <person name="Mignone F."/>
            <person name="Miyake S."/>
            <person name="Morris K."/>
            <person name="Mottagui-Tabar S."/>
            <person name="Mulder N."/>
            <person name="Nakano N."/>
            <person name="Nakauchi H."/>
            <person name="Ng P."/>
            <person name="Nilsson R."/>
            <person name="Nishiguchi S."/>
            <person name="Nishikawa S."/>
            <person name="Nori F."/>
            <person name="Ohara O."/>
            <person name="Okazaki Y."/>
            <person name="Orlando V."/>
            <person name="Pang K.C."/>
            <person name="Pavan W.J."/>
            <person name="Pavesi G."/>
            <person name="Pesole G."/>
            <person name="Petrovsky N."/>
            <person name="Piazza S."/>
            <person name="Reed J."/>
            <person name="Reid J.F."/>
            <person name="Ring B.Z."/>
            <person name="Ringwald M."/>
            <person name="Rost B."/>
            <person name="Ruan Y."/>
            <person name="Salzberg S.L."/>
            <person name="Sandelin A."/>
            <person name="Schneider C."/>
            <person name="Schoenbach C."/>
            <person name="Sekiguchi K."/>
            <person name="Semple C.A."/>
            <person name="Seno S."/>
            <person name="Sessa L."/>
            <person name="Sheng Y."/>
            <person name="Shibata Y."/>
            <person name="Shimada H."/>
            <person name="Shimada K."/>
            <person name="Silva D."/>
            <person name="Sinclair B."/>
            <person name="Sperling S."/>
            <person name="Stupka E."/>
            <person name="Sugiura K."/>
            <person name="Sultana R."/>
            <person name="Takenaka Y."/>
            <person name="Taki K."/>
            <person name="Tammoja K."/>
            <person name="Tan S.L."/>
            <person name="Tang S."/>
            <person name="Taylor M.S."/>
            <person name="Tegner J."/>
            <person name="Teichmann S.A."/>
            <person name="Ueda H.R."/>
            <person name="van Nimwegen E."/>
            <person name="Verardo R."/>
            <person name="Wei C.L."/>
            <person name="Yagi K."/>
            <person name="Yamanishi H."/>
            <person name="Zabarovsky E."/>
            <person name="Zhu S."/>
            <person name="Zimmer A."/>
            <person name="Hide W."/>
            <person name="Bult C."/>
            <person name="Grimmond S.M."/>
            <person name="Teasdale R.D."/>
            <person name="Liu E.T."/>
            <person name="Brusic V."/>
            <person name="Quackenbush J."/>
            <person name="Wahlestedt C."/>
            <person name="Mattick J.S."/>
            <person name="Hume D.A."/>
            <person name="Kai C."/>
            <person name="Sasaki D."/>
            <person name="Tomaru Y."/>
            <person name="Fukuda S."/>
            <person name="Kanamori-Katayama M."/>
            <person name="Suzuki M."/>
            <person name="Aoki J."/>
            <person name="Arakawa T."/>
            <person name="Iida J."/>
            <person name="Imamura K."/>
            <person name="Itoh M."/>
            <person name="Kato T."/>
            <person name="Kawaji H."/>
            <person name="Kawagashira N."/>
            <person name="Kawashima T."/>
            <person name="Kojima M."/>
            <person name="Kondo S."/>
            <person name="Konno H."/>
            <person name="Nakano K."/>
            <person name="Ninomiya N."/>
            <person name="Nishio T."/>
            <person name="Okada M."/>
            <person name="Plessy C."/>
            <person name="Shibata K."/>
            <person name="Shiraki T."/>
            <person name="Suzuki S."/>
            <person name="Tagami M."/>
            <person name="Waki K."/>
            <person name="Watahiki A."/>
            <person name="Okamura-Oho Y."/>
            <person name="Suzuki H."/>
            <person name="Kawai J."/>
            <person name="Hayashizaki Y."/>
        </authorList>
    </citation>
    <scope>NUCLEOTIDE SEQUENCE [LARGE SCALE MRNA]</scope>
    <source>
        <strain>C57BL/6J</strain>
        <tissue>Lung</tissue>
        <tissue>Spinal ganglion</tissue>
    </source>
</reference>
<reference key="3">
    <citation type="journal article" date="2004" name="Genome Res.">
        <title>The status, quality, and expansion of the NIH full-length cDNA project: the Mammalian Gene Collection (MGC).</title>
        <authorList>
            <consortium name="The MGC Project Team"/>
        </authorList>
    </citation>
    <scope>NUCLEOTIDE SEQUENCE [LARGE SCALE MRNA]</scope>
    <source>
        <strain>C57BL/6J</strain>
        <tissue>Brain</tissue>
    </source>
</reference>
<reference key="4">
    <citation type="journal article" date="2009" name="J. Immunol.">
        <title>TRIL, a functional component of the TLR4 signaling complex, highly expressed in brain.</title>
        <authorList>
            <person name="Carpenter S."/>
            <person name="Carlson T."/>
            <person name="Dellacasagrande J."/>
            <person name="Garcia A."/>
            <person name="Gibbons S."/>
            <person name="Hertzog P."/>
            <person name="Lyons A."/>
            <person name="Lin L.L."/>
            <person name="Lynch M."/>
            <person name="Monie T."/>
            <person name="Murphy C."/>
            <person name="Seidl K.J."/>
            <person name="Wells C."/>
            <person name="Dunne A."/>
            <person name="O'Neill L.A."/>
        </authorList>
    </citation>
    <scope>INDUCTION BY LPS</scope>
    <scope>TISSUE SPECIFICITY</scope>
</reference>
<feature type="signal peptide" evidence="3">
    <location>
        <begin position="1"/>
        <end position="25"/>
    </location>
</feature>
<feature type="chain" id="PRO_0000349256" description="TLR4 interactor with leucine rich repeats">
    <location>
        <begin position="26"/>
        <end position="809"/>
    </location>
</feature>
<feature type="topological domain" description="Extracellular" evidence="3">
    <location>
        <begin position="26"/>
        <end position="694"/>
    </location>
</feature>
<feature type="transmembrane region" description="Helical" evidence="3">
    <location>
        <begin position="695"/>
        <end position="715"/>
    </location>
</feature>
<feature type="topological domain" description="Cytoplasmic" evidence="3">
    <location>
        <begin position="716"/>
        <end position="809"/>
    </location>
</feature>
<feature type="domain" description="LRRNT">
    <location>
        <begin position="26"/>
        <end position="57"/>
    </location>
</feature>
<feature type="repeat" description="LRR 1">
    <location>
        <begin position="61"/>
        <end position="81"/>
    </location>
</feature>
<feature type="repeat" description="LRR 2">
    <location>
        <begin position="84"/>
        <end position="105"/>
    </location>
</feature>
<feature type="repeat" description="LRR 3">
    <location>
        <begin position="108"/>
        <end position="129"/>
    </location>
</feature>
<feature type="repeat" description="LRR 4">
    <location>
        <begin position="132"/>
        <end position="153"/>
    </location>
</feature>
<feature type="repeat" description="LRR 5">
    <location>
        <begin position="156"/>
        <end position="177"/>
    </location>
</feature>
<feature type="repeat" description="LRR 6">
    <location>
        <begin position="180"/>
        <end position="201"/>
    </location>
</feature>
<feature type="repeat" description="LRR 7">
    <location>
        <begin position="204"/>
        <end position="223"/>
    </location>
</feature>
<feature type="repeat" description="LRR 8">
    <location>
        <begin position="230"/>
        <end position="251"/>
    </location>
</feature>
<feature type="repeat" description="LRR 9">
    <location>
        <begin position="254"/>
        <end position="275"/>
    </location>
</feature>
<feature type="repeat" description="LRR 10">
    <location>
        <begin position="278"/>
        <end position="298"/>
    </location>
</feature>
<feature type="repeat" description="LRR 11">
    <location>
        <begin position="302"/>
        <end position="323"/>
    </location>
</feature>
<feature type="repeat" description="LRR 12">
    <location>
        <begin position="326"/>
        <end position="347"/>
    </location>
</feature>
<feature type="domain" description="LRRCT">
    <location>
        <begin position="359"/>
        <end position="416"/>
    </location>
</feature>
<feature type="region of interest" description="Disordered" evidence="4">
    <location>
        <begin position="412"/>
        <end position="462"/>
    </location>
</feature>
<feature type="region of interest" description="Disordered" evidence="4">
    <location>
        <begin position="483"/>
        <end position="563"/>
    </location>
</feature>
<feature type="compositionally biased region" description="Polar residues" evidence="4">
    <location>
        <begin position="421"/>
        <end position="436"/>
    </location>
</feature>
<feature type="compositionally biased region" description="Low complexity" evidence="4">
    <location>
        <begin position="488"/>
        <end position="506"/>
    </location>
</feature>
<feature type="compositionally biased region" description="Polar residues" evidence="4">
    <location>
        <begin position="521"/>
        <end position="543"/>
    </location>
</feature>
<feature type="compositionally biased region" description="Low complexity" evidence="4">
    <location>
        <begin position="554"/>
        <end position="563"/>
    </location>
</feature>
<feature type="modified residue" description="Phosphoserine" evidence="2">
    <location>
        <position position="796"/>
    </location>
</feature>
<feature type="glycosylation site" description="N-linked (GlcNAc...) asparagine" evidence="3">
    <location>
        <position position="73"/>
    </location>
</feature>
<feature type="glycosylation site" description="N-linked (GlcNAc...) asparagine" evidence="3">
    <location>
        <position position="411"/>
    </location>
</feature>
<feature type="glycosylation site" description="N-linked (GlcNAc...) asparagine" evidence="3">
    <location>
        <position position="587"/>
    </location>
</feature>
<organism>
    <name type="scientific">Mus musculus</name>
    <name type="common">Mouse</name>
    <dbReference type="NCBI Taxonomy" id="10090"/>
    <lineage>
        <taxon>Eukaryota</taxon>
        <taxon>Metazoa</taxon>
        <taxon>Chordata</taxon>
        <taxon>Craniata</taxon>
        <taxon>Vertebrata</taxon>
        <taxon>Euteleostomi</taxon>
        <taxon>Mammalia</taxon>
        <taxon>Eutheria</taxon>
        <taxon>Euarchontoglires</taxon>
        <taxon>Glires</taxon>
        <taxon>Rodentia</taxon>
        <taxon>Myomorpha</taxon>
        <taxon>Muroidea</taxon>
        <taxon>Muridae</taxon>
        <taxon>Murinae</taxon>
        <taxon>Mus</taxon>
        <taxon>Mus</taxon>
    </lineage>
</organism>
<evidence type="ECO:0000250" key="1"/>
<evidence type="ECO:0000250" key="2">
    <source>
        <dbReference type="UniProtKB" id="Q496Z2"/>
    </source>
</evidence>
<evidence type="ECO:0000255" key="3"/>
<evidence type="ECO:0000256" key="4">
    <source>
        <dbReference type="SAM" id="MobiDB-lite"/>
    </source>
</evidence>
<evidence type="ECO:0000269" key="5">
    <source>
    </source>
</evidence>
<evidence type="ECO:0000305" key="6"/>
<sequence length="809" mass="88810">MEGVGAVRFWLVVCGCLAFPPRAESVCPERCDCQHPQHLLCTNRGLRAVPKTSSLPSPQDVLTYSLGGNFITNITAFDFHRLGQLRRLDLQYNQIRSLHPKTFEKLSRLEELYLGNNLLQALVPGTLAPLRKLRILYANGNEIGRLSRGSFEGLESLVKLRLDGNVLGALPDAVFAPLGNLLYLHLESNRIRFLGKNAFSQLGKLRFLNLSANELQPSLRHAATFVPLRSLSTLILSANSLQHLGPRVFQHLPRLGLLSLSGNQLTHLAPEAFWGLEALRELRLEGNRLNQLPLTLLEPLHSLEALDLSGNELSALHPATFGHQGRLRELSLRDNALSALSGDIFAASPALYRLDLDGNGWTCDCRLRGLKRWMGNWHSQGRLLTVFVQCRHPPALRGKYLDYLDDQLLQNGSCVDPSPSPTAGSRQWPLPTSSEEGMTPPAGLSQELPLQPQPQPQQRGRLLPGVAWGGAAKELVGNRSALRLSRRGPGPHQGPSAAAPGSAPQSLDLHEKPGRGRHTRANLSQTEPTPTSEPASGTPSARDSWQRAAKQRLASEQQESAVQSVSGVGLPPLVSDPCDFNKFILCNLTVEAVSANSASVRWAVREHRSPRPQGGARFRLLFDRFGQQPKFQRFVYLPERSDSATLHELRGDTPYLVCVEGVLGGRVCPVAPRDHCAGLVTLPEAGGRGGVDYQLLTLVLLAVNALLVLLALAAWGSRWLRRKLRARRKGGAPVHVRHMYSTRRPLRSMGTGVSADFSGFQSHRPRTTVCALSEADLIEFPCDRFMDSTGGGTSGSLRREDHLLQRFAD</sequence>
<accession>Q9DBY4</accession>
<accession>Q80TV0</accession>
<accession>Q8BKM5</accession>
<protein>
    <recommendedName>
        <fullName>TLR4 interactor with leucine rich repeats</fullName>
    </recommendedName>
    <alternativeName>
        <fullName>Leucine-rich repeat-containing protein KIAA0644</fullName>
    </alternativeName>
</protein>
<dbReference type="EMBL" id="AK122338">
    <property type="protein sequence ID" value="BAC65620.1"/>
    <property type="status" value="ALT_FRAME"/>
    <property type="molecule type" value="mRNA"/>
</dbReference>
<dbReference type="EMBL" id="AK004681">
    <property type="protein sequence ID" value="BAB23469.1"/>
    <property type="molecule type" value="mRNA"/>
</dbReference>
<dbReference type="EMBL" id="AK033401">
    <property type="protein sequence ID" value="BAC28270.1"/>
    <property type="molecule type" value="mRNA"/>
</dbReference>
<dbReference type="EMBL" id="AK051421">
    <property type="protein sequence ID" value="BAC34634.1"/>
    <property type="molecule type" value="mRNA"/>
</dbReference>
<dbReference type="EMBL" id="BC043099">
    <property type="protein sequence ID" value="AAH43099.1"/>
    <property type="molecule type" value="mRNA"/>
</dbReference>
<dbReference type="EMBL" id="BC059224">
    <property type="protein sequence ID" value="AAH59224.1"/>
    <property type="molecule type" value="mRNA"/>
</dbReference>
<dbReference type="CCDS" id="CCDS51776.1"/>
<dbReference type="RefSeq" id="NP_080093.1">
    <property type="nucleotide sequence ID" value="NM_025817.4"/>
</dbReference>
<dbReference type="SMR" id="Q9DBY4"/>
<dbReference type="BioGRID" id="211779">
    <property type="interactions" value="1"/>
</dbReference>
<dbReference type="FunCoup" id="Q9DBY4">
    <property type="interactions" value="80"/>
</dbReference>
<dbReference type="STRING" id="10090.ENSMUSP00000116056"/>
<dbReference type="GlyConnect" id="2770">
    <property type="glycosylation" value="1 N-Linked glycan (1 site)"/>
</dbReference>
<dbReference type="GlyCosmos" id="Q9DBY4">
    <property type="glycosylation" value="4 sites, 1 glycan"/>
</dbReference>
<dbReference type="GlyGen" id="Q9DBY4">
    <property type="glycosylation" value="7 sites, 4 N-linked glycans (3 sites)"/>
</dbReference>
<dbReference type="iPTMnet" id="Q9DBY4"/>
<dbReference type="PhosphoSitePlus" id="Q9DBY4"/>
<dbReference type="PaxDb" id="10090-ENSMUSP00000116056"/>
<dbReference type="ProteomicsDB" id="258847"/>
<dbReference type="Antibodypedia" id="73340">
    <property type="antibodies" value="25 antibodies from 9 providers"/>
</dbReference>
<dbReference type="DNASU" id="66873"/>
<dbReference type="Ensembl" id="ENSMUST00000127748.5">
    <property type="protein sequence ID" value="ENSMUSP00000116056.3"/>
    <property type="gene ID" value="ENSMUSG00000043496.8"/>
</dbReference>
<dbReference type="GeneID" id="66873"/>
<dbReference type="KEGG" id="mmu:66873"/>
<dbReference type="UCSC" id="uc009bzk.2">
    <property type="organism name" value="mouse"/>
</dbReference>
<dbReference type="AGR" id="MGI:1914123"/>
<dbReference type="CTD" id="9865"/>
<dbReference type="MGI" id="MGI:1914123">
    <property type="gene designation" value="Tril"/>
</dbReference>
<dbReference type="VEuPathDB" id="HostDB:ENSMUSG00000043496"/>
<dbReference type="eggNOG" id="KOG0619">
    <property type="taxonomic scope" value="Eukaryota"/>
</dbReference>
<dbReference type="GeneTree" id="ENSGT00940000161975"/>
<dbReference type="HOGENOM" id="CLU_357128_0_0_1"/>
<dbReference type="InParanoid" id="Q9DBY4"/>
<dbReference type="OMA" id="TDPCDFN"/>
<dbReference type="OrthoDB" id="694479at2759"/>
<dbReference type="PhylomeDB" id="Q9DBY4"/>
<dbReference type="TreeFam" id="TF331598"/>
<dbReference type="BioGRID-ORCS" id="66873">
    <property type="hits" value="5 hits in 76 CRISPR screens"/>
</dbReference>
<dbReference type="ChiTaRS" id="Tril">
    <property type="organism name" value="mouse"/>
</dbReference>
<dbReference type="PRO" id="PR:Q9DBY4"/>
<dbReference type="Proteomes" id="UP000000589">
    <property type="component" value="Chromosome 6"/>
</dbReference>
<dbReference type="RNAct" id="Q9DBY4">
    <property type="molecule type" value="protein"/>
</dbReference>
<dbReference type="Bgee" id="ENSMUSG00000043496">
    <property type="expression patterns" value="Expressed in metanephric mesenchyme and 209 other cell types or tissues"/>
</dbReference>
<dbReference type="GO" id="GO:0046696">
    <property type="term" value="C:lipopolysaccharide receptor complex"/>
    <property type="evidence" value="ECO:0007669"/>
    <property type="project" value="Ensembl"/>
</dbReference>
<dbReference type="GO" id="GO:0001530">
    <property type="term" value="F:lipopolysaccharide binding"/>
    <property type="evidence" value="ECO:0007669"/>
    <property type="project" value="Ensembl"/>
</dbReference>
<dbReference type="GO" id="GO:0006954">
    <property type="term" value="P:inflammatory response"/>
    <property type="evidence" value="ECO:0007669"/>
    <property type="project" value="UniProtKB-KW"/>
</dbReference>
<dbReference type="GO" id="GO:0045087">
    <property type="term" value="P:innate immune response"/>
    <property type="evidence" value="ECO:0007669"/>
    <property type="project" value="UniProtKB-KW"/>
</dbReference>
<dbReference type="GO" id="GO:0002718">
    <property type="term" value="P:regulation of cytokine production involved in immune response"/>
    <property type="evidence" value="ECO:0007669"/>
    <property type="project" value="Ensembl"/>
</dbReference>
<dbReference type="GO" id="GO:0034142">
    <property type="term" value="P:toll-like receptor 4 signaling pathway"/>
    <property type="evidence" value="ECO:0007669"/>
    <property type="project" value="Ensembl"/>
</dbReference>
<dbReference type="CDD" id="cd00063">
    <property type="entry name" value="FN3"/>
    <property type="match status" value="1"/>
</dbReference>
<dbReference type="FunFam" id="3.80.10.10:FF:000169">
    <property type="entry name" value="TLR4 interactor with leucine rich repeats"/>
    <property type="match status" value="1"/>
</dbReference>
<dbReference type="FunFam" id="3.80.10.10:FF:000247">
    <property type="entry name" value="TLR4 interactor with leucine rich repeats"/>
    <property type="match status" value="1"/>
</dbReference>
<dbReference type="Gene3D" id="3.80.10.10">
    <property type="entry name" value="Ribonuclease Inhibitor"/>
    <property type="match status" value="2"/>
</dbReference>
<dbReference type="InterPro" id="IPR050328">
    <property type="entry name" value="Dev_Immune_Receptor"/>
</dbReference>
<dbReference type="InterPro" id="IPR003961">
    <property type="entry name" value="FN3_dom"/>
</dbReference>
<dbReference type="InterPro" id="IPR036116">
    <property type="entry name" value="FN3_sf"/>
</dbReference>
<dbReference type="InterPro" id="IPR001611">
    <property type="entry name" value="Leu-rich_rpt"/>
</dbReference>
<dbReference type="InterPro" id="IPR003591">
    <property type="entry name" value="Leu-rich_rpt_typical-subtyp"/>
</dbReference>
<dbReference type="InterPro" id="IPR032675">
    <property type="entry name" value="LRR_dom_sf"/>
</dbReference>
<dbReference type="PANTHER" id="PTHR24373">
    <property type="entry name" value="SLIT RELATED LEUCINE-RICH REPEAT NEURONAL PROTEIN"/>
    <property type="match status" value="1"/>
</dbReference>
<dbReference type="PANTHER" id="PTHR24373:SF307">
    <property type="entry name" value="TLR4 INTERACTOR WITH LEUCINE RICH REPEATS"/>
    <property type="match status" value="1"/>
</dbReference>
<dbReference type="Pfam" id="PF13855">
    <property type="entry name" value="LRR_8"/>
    <property type="match status" value="4"/>
</dbReference>
<dbReference type="SMART" id="SM00369">
    <property type="entry name" value="LRR_TYP"/>
    <property type="match status" value="11"/>
</dbReference>
<dbReference type="SUPFAM" id="SSF49265">
    <property type="entry name" value="Fibronectin type III"/>
    <property type="match status" value="1"/>
</dbReference>
<dbReference type="SUPFAM" id="SSF52058">
    <property type="entry name" value="L domain-like"/>
    <property type="match status" value="1"/>
</dbReference>
<dbReference type="PROSITE" id="PS51450">
    <property type="entry name" value="LRR"/>
    <property type="match status" value="13"/>
</dbReference>
<proteinExistence type="evidence at transcript level"/>
<name>TRIL_MOUSE</name>
<comment type="function">
    <text evidence="1">Component of the TLR4 signaling complex. Mediates the innate immune response to bacterial lipopolysaccharide (LPS) leading to cytokine secretion (By similarity).</text>
</comment>
<comment type="subunit">
    <text evidence="1">Belongs to the lipopolysaccharide (LPS) receptor, a multi-protein complex containing at least CD14, MD-2 and TLR4. Interacts with TLR4; this interaction is greatly enhanced by LPS stimulation (By similarity). Interacts with LPS (By similarity).</text>
</comment>
<comment type="subcellular location">
    <subcellularLocation>
        <location evidence="6">Membrane</location>
        <topology evidence="6">Single-pass type I membrane protein</topology>
    </subcellularLocation>
</comment>
<comment type="tissue specificity">
    <text evidence="5">Highly expressed in brain, spinal cord and lung.</text>
</comment>
<comment type="induction">
    <text evidence="5">By bacterial lipopolysaccharides (LPS) (in vivo and in vitro).</text>
</comment>
<comment type="PTM">
    <text evidence="1">N-glycolysaled.</text>
</comment>
<comment type="sequence caution" evidence="6">
    <conflict type="frameshift">
        <sequence resource="EMBL-CDS" id="BAC65620"/>
    </conflict>
</comment>
<keyword id="KW-0325">Glycoprotein</keyword>
<keyword id="KW-0391">Immunity</keyword>
<keyword id="KW-0395">Inflammatory response</keyword>
<keyword id="KW-0399">Innate immunity</keyword>
<keyword id="KW-0433">Leucine-rich repeat</keyword>
<keyword id="KW-0472">Membrane</keyword>
<keyword id="KW-0597">Phosphoprotein</keyword>
<keyword id="KW-1185">Reference proteome</keyword>
<keyword id="KW-0677">Repeat</keyword>
<keyword id="KW-0732">Signal</keyword>
<keyword id="KW-0812">Transmembrane</keyword>
<keyword id="KW-1133">Transmembrane helix</keyword>
<gene>
    <name type="primary">Tril</name>
    <name type="synonym">Kiaa0644</name>
</gene>